<gene>
    <name type="primary">LAP1</name>
    <name type="ORF">MCYG_02286</name>
</gene>
<comment type="function">
    <text evidence="1">Extracellular aminopeptidase which contributes to pathogenicity.</text>
</comment>
<comment type="cofactor">
    <cofactor evidence="1">
        <name>Zn(2+)</name>
        <dbReference type="ChEBI" id="CHEBI:29105"/>
    </cofactor>
    <text evidence="1">Binds 2 Zn(2+) ions per subunit.</text>
</comment>
<comment type="subunit">
    <text evidence="1">Monomer.</text>
</comment>
<comment type="subcellular location">
    <subcellularLocation>
        <location evidence="1">Secreted</location>
    </subcellularLocation>
</comment>
<comment type="similarity">
    <text evidence="3">Belongs to the peptidase M28 family. M28E subfamily.</text>
</comment>
<reference key="1">
    <citation type="journal article" date="2012" name="MBio">
        <title>Comparative genome analysis of Trichophyton rubrum and related dermatophytes reveals candidate genes involved in infection.</title>
        <authorList>
            <person name="Martinez D.A."/>
            <person name="Oliver B.G."/>
            <person name="Graeser Y."/>
            <person name="Goldberg J.M."/>
            <person name="Li W."/>
            <person name="Martinez-Rossi N.M."/>
            <person name="Monod M."/>
            <person name="Shelest E."/>
            <person name="Barton R.C."/>
            <person name="Birch E."/>
            <person name="Brakhage A.A."/>
            <person name="Chen Z."/>
            <person name="Gurr S.J."/>
            <person name="Heiman D."/>
            <person name="Heitman J."/>
            <person name="Kosti I."/>
            <person name="Rossi A."/>
            <person name="Saif S."/>
            <person name="Samalova M."/>
            <person name="Saunders C.W."/>
            <person name="Shea T."/>
            <person name="Summerbell R.C."/>
            <person name="Xu J."/>
            <person name="Young S."/>
            <person name="Zeng Q."/>
            <person name="Birren B.W."/>
            <person name="Cuomo C.A."/>
            <person name="White T.C."/>
        </authorList>
    </citation>
    <scope>NUCLEOTIDE SEQUENCE [LARGE SCALE GENOMIC DNA]</scope>
    <source>
        <strain>ATCC MYA-4605 / CBS 113480</strain>
    </source>
</reference>
<proteinExistence type="inferred from homology"/>
<feature type="signal peptide" evidence="2">
    <location>
        <begin position="1"/>
        <end position="18"/>
    </location>
</feature>
<feature type="chain" id="PRO_0000384098" description="Leucine aminopeptidase 1">
    <location>
        <begin position="19"/>
        <end position="373"/>
    </location>
</feature>
<feature type="binding site" evidence="1">
    <location>
        <position position="176"/>
    </location>
    <ligand>
        <name>Zn(2+)</name>
        <dbReference type="ChEBI" id="CHEBI:29105"/>
        <label>1</label>
    </ligand>
</feature>
<feature type="binding site" evidence="1">
    <location>
        <position position="195"/>
    </location>
    <ligand>
        <name>Zn(2+)</name>
        <dbReference type="ChEBI" id="CHEBI:29105"/>
        <label>1</label>
    </ligand>
</feature>
<feature type="binding site" evidence="1">
    <location>
        <position position="195"/>
    </location>
    <ligand>
        <name>Zn(2+)</name>
        <dbReference type="ChEBI" id="CHEBI:29105"/>
        <label>2</label>
        <note>catalytic</note>
    </ligand>
</feature>
<feature type="binding site" evidence="1">
    <location>
        <position position="234"/>
    </location>
    <ligand>
        <name>Zn(2+)</name>
        <dbReference type="ChEBI" id="CHEBI:29105"/>
        <label>2</label>
        <note>catalytic</note>
    </ligand>
</feature>
<feature type="binding site" evidence="1">
    <location>
        <position position="261"/>
    </location>
    <ligand>
        <name>Zn(2+)</name>
        <dbReference type="ChEBI" id="CHEBI:29105"/>
        <label>1</label>
    </ligand>
</feature>
<feature type="binding site" evidence="1">
    <location>
        <position position="343"/>
    </location>
    <ligand>
        <name>Zn(2+)</name>
        <dbReference type="ChEBI" id="CHEBI:29105"/>
        <label>2</label>
        <note>catalytic</note>
    </ligand>
</feature>
<feature type="glycosylation site" description="N-linked (GlcNAc...) asparagine" evidence="2">
    <location>
        <position position="196"/>
    </location>
</feature>
<feature type="glycosylation site" description="N-linked (GlcNAc...) asparagine" evidence="2">
    <location>
        <position position="286"/>
    </location>
</feature>
<feature type="disulfide bond" evidence="1">
    <location>
        <begin position="310"/>
        <end position="314"/>
    </location>
</feature>
<keyword id="KW-0031">Aminopeptidase</keyword>
<keyword id="KW-1015">Disulfide bond</keyword>
<keyword id="KW-0325">Glycoprotein</keyword>
<keyword id="KW-0378">Hydrolase</keyword>
<keyword id="KW-0479">Metal-binding</keyword>
<keyword id="KW-0645">Protease</keyword>
<keyword id="KW-1185">Reference proteome</keyword>
<keyword id="KW-0964">Secreted</keyword>
<keyword id="KW-0732">Signal</keyword>
<keyword id="KW-0843">Virulence</keyword>
<keyword id="KW-0862">Zinc</keyword>
<evidence type="ECO:0000250" key="1"/>
<evidence type="ECO:0000255" key="2"/>
<evidence type="ECO:0000305" key="3"/>
<organism>
    <name type="scientific">Arthroderma otae (strain ATCC MYA-4605 / CBS 113480)</name>
    <name type="common">Microsporum canis</name>
    <dbReference type="NCBI Taxonomy" id="554155"/>
    <lineage>
        <taxon>Eukaryota</taxon>
        <taxon>Fungi</taxon>
        <taxon>Dikarya</taxon>
        <taxon>Ascomycota</taxon>
        <taxon>Pezizomycotina</taxon>
        <taxon>Eurotiomycetes</taxon>
        <taxon>Eurotiomycetidae</taxon>
        <taxon>Onygenales</taxon>
        <taxon>Arthrodermataceae</taxon>
        <taxon>Microsporum</taxon>
    </lineage>
</organism>
<protein>
    <recommendedName>
        <fullName>Leucine aminopeptidase 1</fullName>
        <ecNumber>3.4.11.-</ecNumber>
    </recommendedName>
    <alternativeName>
        <fullName>Leucyl aminopeptidase 1</fullName>
        <shortName>LAP1</shortName>
    </alternativeName>
</protein>
<sequence length="373" mass="40542">MKFISVLALGATATSVLGASIPVDTQVEKFLIELAPGETRWVTEEEKWELKQNGQDFFDITDQDVGFTAAVAQPAVAYPTSIRHADAVNAMIATLSKENMQRDLTKLSSFHNRYYKSDYGKQSATWLQQQVQAAITASGANRYGAKVASFQHNFVQHSIIATIPGRSAEIVVVGAHQDSINGRSPMTGRAPGADDNGSGSVTILEALRGVLQDQTIVQGKAANTIEFHWYAGEEAGLLGSQAIFANYKQAGKKVKGMLNQDMTGYIKGMLDKGLKESFGIITDNVNASLTTFVRMVIKTYCQIPTIDTRCGYACSDHASANRNGFPSAMVAESPIDLLDPHLHTDTDTIDYLSFDHMIQHAKLIVGFVTELAK</sequence>
<dbReference type="EC" id="3.4.11.-"/>
<dbReference type="EMBL" id="DS995702">
    <property type="protein sequence ID" value="EEQ29467.1"/>
    <property type="molecule type" value="Genomic_DNA"/>
</dbReference>
<dbReference type="RefSeq" id="XP_002849352.1">
    <property type="nucleotide sequence ID" value="XM_002849306.1"/>
</dbReference>
<dbReference type="SMR" id="C5FFM0"/>
<dbReference type="STRING" id="554155.C5FFM0"/>
<dbReference type="MEROPS" id="M28.022"/>
<dbReference type="GlyCosmos" id="C5FFM0">
    <property type="glycosylation" value="2 sites, No reported glycans"/>
</dbReference>
<dbReference type="GeneID" id="9226344"/>
<dbReference type="VEuPathDB" id="FungiDB:MCYG_02286"/>
<dbReference type="eggNOG" id="KOG2195">
    <property type="taxonomic scope" value="Eukaryota"/>
</dbReference>
<dbReference type="HOGENOM" id="CLU_025866_0_0_1"/>
<dbReference type="OMA" id="QSATWLQ"/>
<dbReference type="OrthoDB" id="2214at2759"/>
<dbReference type="Proteomes" id="UP000002035">
    <property type="component" value="Unassembled WGS sequence"/>
</dbReference>
<dbReference type="GO" id="GO:0005576">
    <property type="term" value="C:extracellular region"/>
    <property type="evidence" value="ECO:0007669"/>
    <property type="project" value="UniProtKB-SubCell"/>
</dbReference>
<dbReference type="GO" id="GO:0004177">
    <property type="term" value="F:aminopeptidase activity"/>
    <property type="evidence" value="ECO:0007669"/>
    <property type="project" value="UniProtKB-KW"/>
</dbReference>
<dbReference type="GO" id="GO:0046872">
    <property type="term" value="F:metal ion binding"/>
    <property type="evidence" value="ECO:0007669"/>
    <property type="project" value="UniProtKB-KW"/>
</dbReference>
<dbReference type="GO" id="GO:0008235">
    <property type="term" value="F:metalloexopeptidase activity"/>
    <property type="evidence" value="ECO:0007669"/>
    <property type="project" value="InterPro"/>
</dbReference>
<dbReference type="GO" id="GO:0006508">
    <property type="term" value="P:proteolysis"/>
    <property type="evidence" value="ECO:0007669"/>
    <property type="project" value="UniProtKB-KW"/>
</dbReference>
<dbReference type="CDD" id="cd03879">
    <property type="entry name" value="M28_AAP"/>
    <property type="match status" value="1"/>
</dbReference>
<dbReference type="FunFam" id="3.40.630.10:FF:000042">
    <property type="entry name" value="Peptide hydrolase"/>
    <property type="match status" value="1"/>
</dbReference>
<dbReference type="Gene3D" id="3.40.630.10">
    <property type="entry name" value="Zn peptidases"/>
    <property type="match status" value="1"/>
</dbReference>
<dbReference type="InterPro" id="IPR045175">
    <property type="entry name" value="M28_fam"/>
</dbReference>
<dbReference type="InterPro" id="IPR007484">
    <property type="entry name" value="Peptidase_M28"/>
</dbReference>
<dbReference type="PANTHER" id="PTHR12147:SF56">
    <property type="entry name" value="AMINOPEPTIDASE YDR415C-RELATED"/>
    <property type="match status" value="1"/>
</dbReference>
<dbReference type="PANTHER" id="PTHR12147">
    <property type="entry name" value="METALLOPEPTIDASE M28 FAMILY MEMBER"/>
    <property type="match status" value="1"/>
</dbReference>
<dbReference type="Pfam" id="PF04389">
    <property type="entry name" value="Peptidase_M28"/>
    <property type="match status" value="1"/>
</dbReference>
<dbReference type="SUPFAM" id="SSF53187">
    <property type="entry name" value="Zn-dependent exopeptidases"/>
    <property type="match status" value="1"/>
</dbReference>
<name>LAP1_ARTOC</name>
<accession>C5FFM0</accession>